<proteinExistence type="evidence at transcript level"/>
<protein>
    <recommendedName>
        <fullName>Hemoglobin subunit gamma</fullName>
    </recommendedName>
    <alternativeName>
        <fullName>Gamma-globin</fullName>
    </alternativeName>
    <alternativeName>
        <fullName>Hemoglobin gamma chain</fullName>
    </alternativeName>
</protein>
<feature type="chain" id="PRO_0000053234" description="Hemoglobin subunit gamma">
    <location>
        <begin position="1"/>
        <end position="147"/>
    </location>
</feature>
<feature type="domain" description="Globin" evidence="1">
    <location>
        <begin position="3"/>
        <end position="147"/>
    </location>
</feature>
<feature type="binding site" description="distal binding residue" evidence="1">
    <location>
        <position position="64"/>
    </location>
    <ligand>
        <name>heme b</name>
        <dbReference type="ChEBI" id="CHEBI:60344"/>
    </ligand>
    <ligandPart>
        <name>Fe</name>
        <dbReference type="ChEBI" id="CHEBI:18248"/>
    </ligandPart>
</feature>
<feature type="binding site" description="proximal binding residue" evidence="1">
    <location>
        <position position="93"/>
    </location>
    <ligand>
        <name>heme b</name>
        <dbReference type="ChEBI" id="CHEBI:60344"/>
    </ligand>
    <ligandPart>
        <name>Fe</name>
        <dbReference type="ChEBI" id="CHEBI:18248"/>
    </ligandPart>
</feature>
<gene>
    <name type="primary">HBG</name>
</gene>
<reference key="1">
    <citation type="journal article" date="1999" name="Mol. Phylogenet. Evol.">
        <title>Molecular phylogeny of ateline new world monkeys (Platyrrhini, atelinae) based on gamma-globin gene sequences: evidence that Brachyteles is the sister group of Lagothrix.</title>
        <authorList>
            <person name="Meireles C.M."/>
            <person name="Czelusniak J."/>
            <person name="Schneider M.P.C."/>
            <person name="Muniz J.A.P.C."/>
            <person name="Brigido M.C."/>
            <person name="Ferreira H.S."/>
            <person name="Goodman M."/>
        </authorList>
    </citation>
    <scope>NUCLEOTIDE SEQUENCE [GENOMIC DNA]</scope>
</reference>
<comment type="function">
    <text>Gamma chains make up the fetal hemoglobin F, in combination with alpha chains.</text>
</comment>
<comment type="subunit">
    <text>Heterotetramer of two alpha chains and two gamma chains in fetal hemoglobin (Hb F).</text>
</comment>
<comment type="tissue specificity">
    <text>Red blood cells.</text>
</comment>
<comment type="similarity">
    <text evidence="1">Belongs to the globin family.</text>
</comment>
<dbReference type="EMBL" id="AF030095">
    <property type="protein sequence ID" value="AAB92229.1"/>
    <property type="molecule type" value="Genomic_DNA"/>
</dbReference>
<dbReference type="SMR" id="P68031"/>
<dbReference type="GO" id="GO:0072562">
    <property type="term" value="C:blood microparticle"/>
    <property type="evidence" value="ECO:0007669"/>
    <property type="project" value="TreeGrafter"/>
</dbReference>
<dbReference type="GO" id="GO:0031838">
    <property type="term" value="C:haptoglobin-hemoglobin complex"/>
    <property type="evidence" value="ECO:0007669"/>
    <property type="project" value="TreeGrafter"/>
</dbReference>
<dbReference type="GO" id="GO:0005833">
    <property type="term" value="C:hemoglobin complex"/>
    <property type="evidence" value="ECO:0007669"/>
    <property type="project" value="InterPro"/>
</dbReference>
<dbReference type="GO" id="GO:0031720">
    <property type="term" value="F:haptoglobin binding"/>
    <property type="evidence" value="ECO:0007669"/>
    <property type="project" value="TreeGrafter"/>
</dbReference>
<dbReference type="GO" id="GO:0020037">
    <property type="term" value="F:heme binding"/>
    <property type="evidence" value="ECO:0007669"/>
    <property type="project" value="InterPro"/>
</dbReference>
<dbReference type="GO" id="GO:0031721">
    <property type="term" value="F:hemoglobin alpha binding"/>
    <property type="evidence" value="ECO:0007669"/>
    <property type="project" value="TreeGrafter"/>
</dbReference>
<dbReference type="GO" id="GO:0046872">
    <property type="term" value="F:metal ion binding"/>
    <property type="evidence" value="ECO:0007669"/>
    <property type="project" value="UniProtKB-KW"/>
</dbReference>
<dbReference type="GO" id="GO:0043177">
    <property type="term" value="F:organic acid binding"/>
    <property type="evidence" value="ECO:0007669"/>
    <property type="project" value="TreeGrafter"/>
</dbReference>
<dbReference type="GO" id="GO:0019825">
    <property type="term" value="F:oxygen binding"/>
    <property type="evidence" value="ECO:0007669"/>
    <property type="project" value="InterPro"/>
</dbReference>
<dbReference type="GO" id="GO:0005344">
    <property type="term" value="F:oxygen carrier activity"/>
    <property type="evidence" value="ECO:0007669"/>
    <property type="project" value="UniProtKB-KW"/>
</dbReference>
<dbReference type="GO" id="GO:0004601">
    <property type="term" value="F:peroxidase activity"/>
    <property type="evidence" value="ECO:0007669"/>
    <property type="project" value="TreeGrafter"/>
</dbReference>
<dbReference type="GO" id="GO:0042744">
    <property type="term" value="P:hydrogen peroxide catabolic process"/>
    <property type="evidence" value="ECO:0007669"/>
    <property type="project" value="TreeGrafter"/>
</dbReference>
<dbReference type="CDD" id="cd08925">
    <property type="entry name" value="Hb-beta-like"/>
    <property type="match status" value="1"/>
</dbReference>
<dbReference type="FunFam" id="1.10.490.10:FF:000001">
    <property type="entry name" value="Hemoglobin subunit beta"/>
    <property type="match status" value="1"/>
</dbReference>
<dbReference type="Gene3D" id="1.10.490.10">
    <property type="entry name" value="Globins"/>
    <property type="match status" value="1"/>
</dbReference>
<dbReference type="InterPro" id="IPR000971">
    <property type="entry name" value="Globin"/>
</dbReference>
<dbReference type="InterPro" id="IPR009050">
    <property type="entry name" value="Globin-like_sf"/>
</dbReference>
<dbReference type="InterPro" id="IPR012292">
    <property type="entry name" value="Globin/Proto"/>
</dbReference>
<dbReference type="InterPro" id="IPR002337">
    <property type="entry name" value="Hemoglobin_b"/>
</dbReference>
<dbReference type="InterPro" id="IPR050056">
    <property type="entry name" value="Hemoglobin_oxygen_transport"/>
</dbReference>
<dbReference type="PANTHER" id="PTHR11442">
    <property type="entry name" value="HEMOGLOBIN FAMILY MEMBER"/>
    <property type="match status" value="1"/>
</dbReference>
<dbReference type="PANTHER" id="PTHR11442:SF52">
    <property type="entry name" value="HEMOGLOBIN SUBUNIT GAMMA-1"/>
    <property type="match status" value="1"/>
</dbReference>
<dbReference type="Pfam" id="PF00042">
    <property type="entry name" value="Globin"/>
    <property type="match status" value="1"/>
</dbReference>
<dbReference type="PRINTS" id="PR00814">
    <property type="entry name" value="BETAHAEM"/>
</dbReference>
<dbReference type="SUPFAM" id="SSF46458">
    <property type="entry name" value="Globin-like"/>
    <property type="match status" value="1"/>
</dbReference>
<dbReference type="PROSITE" id="PS01033">
    <property type="entry name" value="GLOBIN"/>
    <property type="match status" value="1"/>
</dbReference>
<keyword id="KW-0349">Heme</keyword>
<keyword id="KW-0408">Iron</keyword>
<keyword id="KW-0479">Metal-binding</keyword>
<keyword id="KW-0561">Oxygen transport</keyword>
<keyword id="KW-0813">Transport</keyword>
<sequence>MSNFTAEDKAAITSLWGKVNVEDAGGETLGRLLVVYPWTQRFFDSFGSLSSPSAIMGNPKVKAHGVKVLTSLGEAIKNLDDLKGTFGSLSELHCDKLHVDPENFRLLGNVLVTVLAILHGKEFTPEVQASWQKMVAGVASALASRYH</sequence>
<accession>P68031</accession>
<accession>P56284</accession>
<name>HBG_ALOCA</name>
<evidence type="ECO:0000255" key="1">
    <source>
        <dbReference type="PROSITE-ProRule" id="PRU00238"/>
    </source>
</evidence>
<organism>
    <name type="scientific">Alouatta caraya</name>
    <name type="common">Black howler monkey</name>
    <dbReference type="NCBI Taxonomy" id="9502"/>
    <lineage>
        <taxon>Eukaryota</taxon>
        <taxon>Metazoa</taxon>
        <taxon>Chordata</taxon>
        <taxon>Craniata</taxon>
        <taxon>Vertebrata</taxon>
        <taxon>Euteleostomi</taxon>
        <taxon>Mammalia</taxon>
        <taxon>Eutheria</taxon>
        <taxon>Euarchontoglires</taxon>
        <taxon>Primates</taxon>
        <taxon>Haplorrhini</taxon>
        <taxon>Platyrrhini</taxon>
        <taxon>Atelidae</taxon>
        <taxon>Alouattinae</taxon>
        <taxon>Alouatta</taxon>
    </lineage>
</organism>